<reference key="1">
    <citation type="journal article" date="2006" name="Nature">
        <title>DNA sequence of human chromosome 17 and analysis of rearrangement in the human lineage.</title>
        <authorList>
            <person name="Zody M.C."/>
            <person name="Garber M."/>
            <person name="Adams D.J."/>
            <person name="Sharpe T."/>
            <person name="Harrow J."/>
            <person name="Lupski J.R."/>
            <person name="Nicholson C."/>
            <person name="Searle S.M."/>
            <person name="Wilming L."/>
            <person name="Young S.K."/>
            <person name="Abouelleil A."/>
            <person name="Allen N.R."/>
            <person name="Bi W."/>
            <person name="Bloom T."/>
            <person name="Borowsky M.L."/>
            <person name="Bugalter B.E."/>
            <person name="Butler J."/>
            <person name="Chang J.L."/>
            <person name="Chen C.-K."/>
            <person name="Cook A."/>
            <person name="Corum B."/>
            <person name="Cuomo C.A."/>
            <person name="de Jong P.J."/>
            <person name="DeCaprio D."/>
            <person name="Dewar K."/>
            <person name="FitzGerald M."/>
            <person name="Gilbert J."/>
            <person name="Gibson R."/>
            <person name="Gnerre S."/>
            <person name="Goldstein S."/>
            <person name="Grafham D.V."/>
            <person name="Grocock R."/>
            <person name="Hafez N."/>
            <person name="Hagopian D.S."/>
            <person name="Hart E."/>
            <person name="Norman C.H."/>
            <person name="Humphray S."/>
            <person name="Jaffe D.B."/>
            <person name="Jones M."/>
            <person name="Kamal M."/>
            <person name="Khodiyar V.K."/>
            <person name="LaButti K."/>
            <person name="Laird G."/>
            <person name="Lehoczky J."/>
            <person name="Liu X."/>
            <person name="Lokyitsang T."/>
            <person name="Loveland J."/>
            <person name="Lui A."/>
            <person name="Macdonald P."/>
            <person name="Major J.E."/>
            <person name="Matthews L."/>
            <person name="Mauceli E."/>
            <person name="McCarroll S.A."/>
            <person name="Mihalev A.H."/>
            <person name="Mudge J."/>
            <person name="Nguyen C."/>
            <person name="Nicol R."/>
            <person name="O'Leary S.B."/>
            <person name="Osoegawa K."/>
            <person name="Schwartz D.C."/>
            <person name="Shaw-Smith C."/>
            <person name="Stankiewicz P."/>
            <person name="Steward C."/>
            <person name="Swarbreck D."/>
            <person name="Venkataraman V."/>
            <person name="Whittaker C.A."/>
            <person name="Yang X."/>
            <person name="Zimmer A.R."/>
            <person name="Bradley A."/>
            <person name="Hubbard T."/>
            <person name="Birren B.W."/>
            <person name="Rogers J."/>
            <person name="Lander E.S."/>
            <person name="Nusbaum C."/>
        </authorList>
    </citation>
    <scope>NUCLEOTIDE SEQUENCE [LARGE SCALE GENOMIC DNA]</scope>
</reference>
<reference key="2">
    <citation type="submission" date="2005-09" db="EMBL/GenBank/DDBJ databases">
        <authorList>
            <person name="Mural R.J."/>
            <person name="Istrail S."/>
            <person name="Sutton G.G."/>
            <person name="Florea L."/>
            <person name="Halpern A.L."/>
            <person name="Mobarry C.M."/>
            <person name="Lippert R."/>
            <person name="Walenz B."/>
            <person name="Shatkay H."/>
            <person name="Dew I."/>
            <person name="Miller J.R."/>
            <person name="Flanigan M.J."/>
            <person name="Edwards N.J."/>
            <person name="Bolanos R."/>
            <person name="Fasulo D."/>
            <person name="Halldorsson B.V."/>
            <person name="Hannenhalli S."/>
            <person name="Turner R."/>
            <person name="Yooseph S."/>
            <person name="Lu F."/>
            <person name="Nusskern D.R."/>
            <person name="Shue B.C."/>
            <person name="Zheng X.H."/>
            <person name="Zhong F."/>
            <person name="Delcher A.L."/>
            <person name="Huson D.H."/>
            <person name="Kravitz S.A."/>
            <person name="Mouchard L."/>
            <person name="Reinert K."/>
            <person name="Remington K.A."/>
            <person name="Clark A.G."/>
            <person name="Waterman M.S."/>
            <person name="Eichler E.E."/>
            <person name="Adams M.D."/>
            <person name="Hunkapiller M.W."/>
            <person name="Myers E.W."/>
            <person name="Venter J.C."/>
        </authorList>
    </citation>
    <scope>NUCLEOTIDE SEQUENCE [LARGE SCALE GENOMIC DNA]</scope>
</reference>
<reference key="3">
    <citation type="journal article" date="2009" name="Nat. Biotechnol.">
        <title>Mass-spectrometric identification and relative quantification of N-linked cell surface glycoproteins.</title>
        <authorList>
            <person name="Wollscheid B."/>
            <person name="Bausch-Fluck D."/>
            <person name="Henderson C."/>
            <person name="O'Brien R."/>
            <person name="Bibel M."/>
            <person name="Schiess R."/>
            <person name="Aebersold R."/>
            <person name="Watts J.D."/>
        </authorList>
    </citation>
    <scope>GLYCOSYLATION [LARGE SCALE ANALYSIS] AT ASN-66</scope>
    <source>
        <tissue>Leukemic T-cell</tissue>
    </source>
</reference>
<reference key="4">
    <citation type="journal article" date="2013" name="J. Proteome Res.">
        <title>Toward a comprehensive characterization of a human cancer cell phosphoproteome.</title>
        <authorList>
            <person name="Zhou H."/>
            <person name="Di Palma S."/>
            <person name="Preisinger C."/>
            <person name="Peng M."/>
            <person name="Polat A.N."/>
            <person name="Heck A.J."/>
            <person name="Mohammed S."/>
        </authorList>
    </citation>
    <scope>PHOSPHORYLATION [LARGE SCALE ANALYSIS] AT SER-789</scope>
    <scope>IDENTIFICATION BY MASS SPECTROMETRY [LARGE SCALE ANALYSIS]</scope>
    <source>
        <tissue>Cervix carcinoma</tissue>
        <tissue>Erythroleukemia</tissue>
    </source>
</reference>
<evidence type="ECO:0000250" key="1">
    <source>
        <dbReference type="UniProtKB" id="A2A699"/>
    </source>
</evidence>
<evidence type="ECO:0000255" key="2"/>
<evidence type="ECO:0000256" key="3">
    <source>
        <dbReference type="SAM" id="MobiDB-lite"/>
    </source>
</evidence>
<evidence type="ECO:0000269" key="4">
    <source>
    </source>
</evidence>
<evidence type="ECO:0000305" key="5"/>
<evidence type="ECO:0007744" key="6">
    <source>
    </source>
</evidence>
<name>F1712_HUMAN</name>
<proteinExistence type="evidence at protein level"/>
<accession>A8MVW0</accession>
<accession>A8MQB4</accession>
<comment type="subcellular location">
    <subcellularLocation>
        <location evidence="5">Membrane</location>
        <topology evidence="5">Single-pass type I membrane protein</topology>
    </subcellularLocation>
</comment>
<comment type="similarity">
    <text evidence="5">Belongs to the FAM171 family.</text>
</comment>
<gene>
    <name type="primary">FAM171A2</name>
</gene>
<keyword id="KW-0325">Glycoprotein</keyword>
<keyword id="KW-0472">Membrane</keyword>
<keyword id="KW-0597">Phosphoprotein</keyword>
<keyword id="KW-1267">Proteomics identification</keyword>
<keyword id="KW-1185">Reference proteome</keyword>
<keyword id="KW-0732">Signal</keyword>
<keyword id="KW-0812">Transmembrane</keyword>
<keyword id="KW-1133">Transmembrane helix</keyword>
<protein>
    <recommendedName>
        <fullName>Protein FAM171A2</fullName>
    </recommendedName>
</protein>
<organism>
    <name type="scientific">Homo sapiens</name>
    <name type="common">Human</name>
    <dbReference type="NCBI Taxonomy" id="9606"/>
    <lineage>
        <taxon>Eukaryota</taxon>
        <taxon>Metazoa</taxon>
        <taxon>Chordata</taxon>
        <taxon>Craniata</taxon>
        <taxon>Vertebrata</taxon>
        <taxon>Euteleostomi</taxon>
        <taxon>Mammalia</taxon>
        <taxon>Eutheria</taxon>
        <taxon>Euarchontoglires</taxon>
        <taxon>Primates</taxon>
        <taxon>Haplorrhini</taxon>
        <taxon>Catarrhini</taxon>
        <taxon>Hominidae</taxon>
        <taxon>Homo</taxon>
    </lineage>
</organism>
<feature type="signal peptide" evidence="2">
    <location>
        <begin position="1"/>
        <end position="29"/>
    </location>
</feature>
<feature type="chain" id="PRO_0000328771" description="Protein FAM171A2">
    <location>
        <begin position="30"/>
        <end position="826"/>
    </location>
</feature>
<feature type="topological domain" description="Extracellular" evidence="2">
    <location>
        <begin position="30"/>
        <end position="315"/>
    </location>
</feature>
<feature type="transmembrane region" description="Helical" evidence="2">
    <location>
        <begin position="316"/>
        <end position="336"/>
    </location>
</feature>
<feature type="topological domain" description="Cytoplasmic" evidence="2">
    <location>
        <begin position="337"/>
        <end position="826"/>
    </location>
</feature>
<feature type="region of interest" description="Disordered" evidence="3">
    <location>
        <begin position="350"/>
        <end position="369"/>
    </location>
</feature>
<feature type="region of interest" description="Disordered" evidence="3">
    <location>
        <begin position="379"/>
        <end position="404"/>
    </location>
</feature>
<feature type="region of interest" description="Disordered" evidence="3">
    <location>
        <begin position="416"/>
        <end position="493"/>
    </location>
</feature>
<feature type="region of interest" description="Disordered" evidence="3">
    <location>
        <begin position="554"/>
        <end position="610"/>
    </location>
</feature>
<feature type="region of interest" description="Disordered" evidence="3">
    <location>
        <begin position="676"/>
        <end position="826"/>
    </location>
</feature>
<feature type="compositionally biased region" description="Gly residues" evidence="3">
    <location>
        <begin position="590"/>
        <end position="606"/>
    </location>
</feature>
<feature type="compositionally biased region" description="Basic and acidic residues" evidence="3">
    <location>
        <begin position="690"/>
        <end position="710"/>
    </location>
</feature>
<feature type="compositionally biased region" description="Pro residues" evidence="3">
    <location>
        <begin position="712"/>
        <end position="722"/>
    </location>
</feature>
<feature type="compositionally biased region" description="Polar residues" evidence="3">
    <location>
        <begin position="732"/>
        <end position="750"/>
    </location>
</feature>
<feature type="compositionally biased region" description="Acidic residues" evidence="3">
    <location>
        <begin position="793"/>
        <end position="804"/>
    </location>
</feature>
<feature type="compositionally biased region" description="Basic and acidic residues" evidence="3">
    <location>
        <begin position="805"/>
        <end position="819"/>
    </location>
</feature>
<feature type="modified residue" description="Phosphoserine" evidence="1">
    <location>
        <position position="370"/>
    </location>
</feature>
<feature type="modified residue" description="Phosphoserine" evidence="1">
    <location>
        <position position="372"/>
    </location>
</feature>
<feature type="modified residue" description="Phosphoserine" evidence="6">
    <location>
        <position position="789"/>
    </location>
</feature>
<feature type="glycosylation site" description="N-linked (GlcNAc...) asparagine" evidence="4">
    <location>
        <position position="66"/>
    </location>
</feature>
<feature type="glycosylation site" description="N-linked (GlcNAc...) asparagine" evidence="2">
    <location>
        <position position="201"/>
    </location>
</feature>
<feature type="glycosylation site" description="N-linked (GlcNAc...) asparagine" evidence="2">
    <location>
        <position position="221"/>
    </location>
</feature>
<feature type="glycosylation site" description="N-linked (GlcNAc...) asparagine" evidence="2">
    <location>
        <position position="265"/>
    </location>
</feature>
<dbReference type="EMBL" id="AC003043">
    <property type="status" value="NOT_ANNOTATED_CDS"/>
    <property type="molecule type" value="Genomic_DNA"/>
</dbReference>
<dbReference type="EMBL" id="CH471178">
    <property type="protein sequence ID" value="EAW51598.1"/>
    <property type="molecule type" value="Genomic_DNA"/>
</dbReference>
<dbReference type="CCDS" id="CCDS45701.1"/>
<dbReference type="RefSeq" id="NP_940877.2">
    <property type="nucleotide sequence ID" value="NM_198475.2"/>
</dbReference>
<dbReference type="BioGRID" id="129748">
    <property type="interactions" value="109"/>
</dbReference>
<dbReference type="FunCoup" id="A8MVW0">
    <property type="interactions" value="933"/>
</dbReference>
<dbReference type="IntAct" id="A8MVW0">
    <property type="interactions" value="74"/>
</dbReference>
<dbReference type="MINT" id="A8MVW0"/>
<dbReference type="STRING" id="9606.ENSP00000293443"/>
<dbReference type="GlyConnect" id="1658">
    <property type="glycosylation" value="3 N-Linked glycans (2 sites)"/>
</dbReference>
<dbReference type="GlyCosmos" id="A8MVW0">
    <property type="glycosylation" value="4 sites, 3 glycans"/>
</dbReference>
<dbReference type="GlyGen" id="A8MVW0">
    <property type="glycosylation" value="4 sites, 5 N-linked glycans (2 sites)"/>
</dbReference>
<dbReference type="iPTMnet" id="A8MVW0"/>
<dbReference type="PhosphoSitePlus" id="A8MVW0"/>
<dbReference type="SwissPalm" id="A8MVW0"/>
<dbReference type="BioMuta" id="FAM171A2"/>
<dbReference type="jPOST" id="A8MVW0"/>
<dbReference type="MassIVE" id="A8MVW0"/>
<dbReference type="PaxDb" id="9606-ENSP00000293443"/>
<dbReference type="PeptideAtlas" id="A8MVW0"/>
<dbReference type="ProteomicsDB" id="2208"/>
<dbReference type="Pumba" id="A8MVW0"/>
<dbReference type="Antibodypedia" id="8250">
    <property type="antibodies" value="23 antibodies from 12 providers"/>
</dbReference>
<dbReference type="DNASU" id="284069"/>
<dbReference type="Ensembl" id="ENST00000293443.12">
    <property type="protein sequence ID" value="ENSP00000293443.6"/>
    <property type="gene ID" value="ENSG00000161682.15"/>
</dbReference>
<dbReference type="GeneID" id="284069"/>
<dbReference type="KEGG" id="hsa:284069"/>
<dbReference type="MANE-Select" id="ENST00000293443.12">
    <property type="protein sequence ID" value="ENSP00000293443.6"/>
    <property type="RefSeq nucleotide sequence ID" value="NM_198475.3"/>
    <property type="RefSeq protein sequence ID" value="NP_940877.2"/>
</dbReference>
<dbReference type="UCSC" id="uc002igs.3">
    <property type="organism name" value="human"/>
</dbReference>
<dbReference type="AGR" id="HGNC:30480"/>
<dbReference type="CTD" id="284069"/>
<dbReference type="DisGeNET" id="284069"/>
<dbReference type="GeneCards" id="FAM171A2"/>
<dbReference type="HGNC" id="HGNC:30480">
    <property type="gene designation" value="FAM171A2"/>
</dbReference>
<dbReference type="HPA" id="ENSG00000161682">
    <property type="expression patterns" value="Tissue enhanced (brain, pituitary gland)"/>
</dbReference>
<dbReference type="neXtProt" id="NX_A8MVW0"/>
<dbReference type="OpenTargets" id="ENSG00000161682"/>
<dbReference type="PharmGKB" id="PA162387197"/>
<dbReference type="VEuPathDB" id="HostDB:ENSG00000161682"/>
<dbReference type="eggNOG" id="ENOG502QTDH">
    <property type="taxonomic scope" value="Eukaryota"/>
</dbReference>
<dbReference type="GeneTree" id="ENSGT00950000183184"/>
<dbReference type="HOGENOM" id="CLU_019729_0_0_1"/>
<dbReference type="InParanoid" id="A8MVW0"/>
<dbReference type="OMA" id="HLICAGP"/>
<dbReference type="OrthoDB" id="8762914at2759"/>
<dbReference type="PAN-GO" id="A8MVW0">
    <property type="GO annotations" value="0 GO annotations based on evolutionary models"/>
</dbReference>
<dbReference type="PhylomeDB" id="A8MVW0"/>
<dbReference type="TreeFam" id="TF331338"/>
<dbReference type="PathwayCommons" id="A8MVW0"/>
<dbReference type="SignaLink" id="A8MVW0"/>
<dbReference type="BioGRID-ORCS" id="284069">
    <property type="hits" value="9 hits in 1162 CRISPR screens"/>
</dbReference>
<dbReference type="ChiTaRS" id="FAM171A2">
    <property type="organism name" value="human"/>
</dbReference>
<dbReference type="GenomeRNAi" id="284069"/>
<dbReference type="Pharos" id="A8MVW0">
    <property type="development level" value="Tdark"/>
</dbReference>
<dbReference type="PRO" id="PR:A8MVW0"/>
<dbReference type="Proteomes" id="UP000005640">
    <property type="component" value="Chromosome 17"/>
</dbReference>
<dbReference type="RNAct" id="A8MVW0">
    <property type="molecule type" value="protein"/>
</dbReference>
<dbReference type="Bgee" id="ENSG00000161682">
    <property type="expression patterns" value="Expressed in cortical plate and 119 other cell types or tissues"/>
</dbReference>
<dbReference type="ExpressionAtlas" id="A8MVW0">
    <property type="expression patterns" value="baseline and differential"/>
</dbReference>
<dbReference type="GO" id="GO:0016020">
    <property type="term" value="C:membrane"/>
    <property type="evidence" value="ECO:0007669"/>
    <property type="project" value="UniProtKB-SubCell"/>
</dbReference>
<dbReference type="InterPro" id="IPR018890">
    <property type="entry name" value="FAM171"/>
</dbReference>
<dbReference type="InterPro" id="IPR049175">
    <property type="entry name" value="FAM171_C"/>
</dbReference>
<dbReference type="InterPro" id="IPR048530">
    <property type="entry name" value="FAM171_N"/>
</dbReference>
<dbReference type="PANTHER" id="PTHR31626:SF3">
    <property type="entry name" value="PROTEIN FAM171A2"/>
    <property type="match status" value="1"/>
</dbReference>
<dbReference type="PANTHER" id="PTHR31626">
    <property type="entry name" value="SUSHI DOMAIN-CONTAINING PROTEIN"/>
    <property type="match status" value="1"/>
</dbReference>
<dbReference type="Pfam" id="PF20771">
    <property type="entry name" value="FAM171A1-2-B_C"/>
    <property type="match status" value="1"/>
</dbReference>
<dbReference type="Pfam" id="PF10577">
    <property type="entry name" value="FAM171A1-2-B_N"/>
    <property type="match status" value="1"/>
</dbReference>
<sequence length="826" mass="87435">MPPASGPSVLARLLPLLGLLLGSASRAPGKSPPEPPSPQEILIKVQVYVSGELVPLARASVDVFGNRTLLAAGTTDSEGVATLPLSYRLGTWVLVTAARPGFLTNSVPWRVDKLPLYASVSLYLLPERPATLILYEDLVHILLGSPGARSQPLVQFQRRAARLPVSSTYSQLWASLTPASTQQEMRAFPAFLGTEASSSGNGSWLELMPLTAVSVHLLTGNGTEVPLSGPIHLSLPVPSETRALTVGTSIPAWRFDPKSGLWVRNGTGVIRKEGRQLYWTFVSPQLGYWVAAMASPTAGLVTITSGIQDIGTYHTIFLLTILAALALLVLILLCLLIYYCRRRCLKPRQQHRKLQLSGPSDGNKRDQATSMSQLHLICGGPLEPAPSGDPEAPPPGPLHSAFSSSRDLASSRDDFFRTKPRSASRPAAEPSGARGGESAGLKGARSAEGPGGLEPGLEEHRRGPSGAAAFLHEPPSPPPPFDHYLGHKGAAEGKTPDFLLSQSVDQLARPPSLGQAGQLIFCGSIDHLKDNVYRNVMPTLVIPAHYVRLGGEAGAAGVGDEPAPPEGTAPGPARAFPQPDPQRPQMPGHSGPGGEGGGGGGEGWGAGRAAPVSGSVTIPVLFNESTMAQLNGELQALTEKKLLELGVKPHPRAWFVSLDGRSNSQVRHSYIDLQAGGGARSTDASLDSGVDVHEARPARRRPAREERERAPPAAPPPPPAPPRLALSEDTEPSSSESRTGLCSPEDNSLTPLLDEVAAPEGRAATVPRGRGRSRGDSSRSSASELRRDSLTSPEDELGAEVGDEAGDKKSPWQRREERPLMVFNVK</sequence>